<evidence type="ECO:0000255" key="1">
    <source>
        <dbReference type="HAMAP-Rule" id="MF_00206"/>
    </source>
</evidence>
<evidence type="ECO:0000255" key="2">
    <source>
        <dbReference type="PROSITE-ProRule" id="PRU01266"/>
    </source>
</evidence>
<evidence type="ECO:0000256" key="3">
    <source>
        <dbReference type="SAM" id="MobiDB-lite"/>
    </source>
</evidence>
<accession>A2S5Y9</accession>
<protein>
    <recommendedName>
        <fullName evidence="1">Lipoyl synthase</fullName>
        <ecNumber evidence="1">2.8.1.8</ecNumber>
    </recommendedName>
    <alternativeName>
        <fullName evidence="1">Lip-syn</fullName>
        <shortName evidence="1">LS</shortName>
    </alternativeName>
    <alternativeName>
        <fullName evidence="1">Lipoate synthase</fullName>
    </alternativeName>
    <alternativeName>
        <fullName evidence="1">Lipoic acid synthase</fullName>
    </alternativeName>
    <alternativeName>
        <fullName evidence="1">Sulfur insertion protein LipA</fullName>
    </alternativeName>
</protein>
<reference key="1">
    <citation type="journal article" date="2010" name="Genome Biol. Evol.">
        <title>Continuing evolution of Burkholderia mallei through genome reduction and large-scale rearrangements.</title>
        <authorList>
            <person name="Losada L."/>
            <person name="Ronning C.M."/>
            <person name="DeShazer D."/>
            <person name="Woods D."/>
            <person name="Fedorova N."/>
            <person name="Kim H.S."/>
            <person name="Shabalina S.A."/>
            <person name="Pearson T.R."/>
            <person name="Brinkac L."/>
            <person name="Tan P."/>
            <person name="Nandi T."/>
            <person name="Crabtree J."/>
            <person name="Badger J."/>
            <person name="Beckstrom-Sternberg S."/>
            <person name="Saqib M."/>
            <person name="Schutzer S.E."/>
            <person name="Keim P."/>
            <person name="Nierman W.C."/>
        </authorList>
    </citation>
    <scope>NUCLEOTIDE SEQUENCE [LARGE SCALE GENOMIC DNA]</scope>
    <source>
        <strain>NCTC 10229</strain>
    </source>
</reference>
<organism>
    <name type="scientific">Burkholderia mallei (strain NCTC 10229)</name>
    <dbReference type="NCBI Taxonomy" id="412022"/>
    <lineage>
        <taxon>Bacteria</taxon>
        <taxon>Pseudomonadati</taxon>
        <taxon>Pseudomonadota</taxon>
        <taxon>Betaproteobacteria</taxon>
        <taxon>Burkholderiales</taxon>
        <taxon>Burkholderiaceae</taxon>
        <taxon>Burkholderia</taxon>
        <taxon>pseudomallei group</taxon>
    </lineage>
</organism>
<feature type="chain" id="PRO_1000012198" description="Lipoyl synthase">
    <location>
        <begin position="1"/>
        <end position="329"/>
    </location>
</feature>
<feature type="domain" description="Radical SAM core" evidence="2">
    <location>
        <begin position="87"/>
        <end position="305"/>
    </location>
</feature>
<feature type="region of interest" description="Disordered" evidence="3">
    <location>
        <begin position="1"/>
        <end position="23"/>
    </location>
</feature>
<feature type="binding site" evidence="1">
    <location>
        <position position="76"/>
    </location>
    <ligand>
        <name>[4Fe-4S] cluster</name>
        <dbReference type="ChEBI" id="CHEBI:49883"/>
        <label>1</label>
    </ligand>
</feature>
<feature type="binding site" evidence="1">
    <location>
        <position position="81"/>
    </location>
    <ligand>
        <name>[4Fe-4S] cluster</name>
        <dbReference type="ChEBI" id="CHEBI:49883"/>
        <label>1</label>
    </ligand>
</feature>
<feature type="binding site" evidence="1">
    <location>
        <position position="87"/>
    </location>
    <ligand>
        <name>[4Fe-4S] cluster</name>
        <dbReference type="ChEBI" id="CHEBI:49883"/>
        <label>1</label>
    </ligand>
</feature>
<feature type="binding site" evidence="1">
    <location>
        <position position="102"/>
    </location>
    <ligand>
        <name>[4Fe-4S] cluster</name>
        <dbReference type="ChEBI" id="CHEBI:49883"/>
        <label>2</label>
        <note>4Fe-4S-S-AdoMet</note>
    </ligand>
</feature>
<feature type="binding site" evidence="1">
    <location>
        <position position="106"/>
    </location>
    <ligand>
        <name>[4Fe-4S] cluster</name>
        <dbReference type="ChEBI" id="CHEBI:49883"/>
        <label>2</label>
        <note>4Fe-4S-S-AdoMet</note>
    </ligand>
</feature>
<feature type="binding site" evidence="1">
    <location>
        <position position="109"/>
    </location>
    <ligand>
        <name>[4Fe-4S] cluster</name>
        <dbReference type="ChEBI" id="CHEBI:49883"/>
        <label>2</label>
        <note>4Fe-4S-S-AdoMet</note>
    </ligand>
</feature>
<feature type="binding site" evidence="1">
    <location>
        <position position="316"/>
    </location>
    <ligand>
        <name>[4Fe-4S] cluster</name>
        <dbReference type="ChEBI" id="CHEBI:49883"/>
        <label>1</label>
    </ligand>
</feature>
<dbReference type="EC" id="2.8.1.8" evidence="1"/>
<dbReference type="EMBL" id="CP000546">
    <property type="protein sequence ID" value="ABN01937.1"/>
    <property type="molecule type" value="Genomic_DNA"/>
</dbReference>
<dbReference type="RefSeq" id="WP_004189177.1">
    <property type="nucleotide sequence ID" value="NC_008836.1"/>
</dbReference>
<dbReference type="SMR" id="A2S5Y9"/>
<dbReference type="GeneID" id="92977834"/>
<dbReference type="KEGG" id="bml:BMA10229_A1375"/>
<dbReference type="HOGENOM" id="CLU_033144_2_1_4"/>
<dbReference type="UniPathway" id="UPA00538">
    <property type="reaction ID" value="UER00593"/>
</dbReference>
<dbReference type="Proteomes" id="UP000002283">
    <property type="component" value="Chromosome I"/>
</dbReference>
<dbReference type="GO" id="GO:0005737">
    <property type="term" value="C:cytoplasm"/>
    <property type="evidence" value="ECO:0007669"/>
    <property type="project" value="UniProtKB-SubCell"/>
</dbReference>
<dbReference type="GO" id="GO:0051539">
    <property type="term" value="F:4 iron, 4 sulfur cluster binding"/>
    <property type="evidence" value="ECO:0007669"/>
    <property type="project" value="UniProtKB-UniRule"/>
</dbReference>
<dbReference type="GO" id="GO:0016992">
    <property type="term" value="F:lipoate synthase activity"/>
    <property type="evidence" value="ECO:0007669"/>
    <property type="project" value="UniProtKB-UniRule"/>
</dbReference>
<dbReference type="GO" id="GO:0046872">
    <property type="term" value="F:metal ion binding"/>
    <property type="evidence" value="ECO:0007669"/>
    <property type="project" value="UniProtKB-KW"/>
</dbReference>
<dbReference type="CDD" id="cd01335">
    <property type="entry name" value="Radical_SAM"/>
    <property type="match status" value="1"/>
</dbReference>
<dbReference type="FunFam" id="3.20.20.70:FF:000040">
    <property type="entry name" value="Lipoyl synthase"/>
    <property type="match status" value="1"/>
</dbReference>
<dbReference type="Gene3D" id="3.20.20.70">
    <property type="entry name" value="Aldolase class I"/>
    <property type="match status" value="1"/>
</dbReference>
<dbReference type="HAMAP" id="MF_00206">
    <property type="entry name" value="Lipoyl_synth"/>
    <property type="match status" value="1"/>
</dbReference>
<dbReference type="InterPro" id="IPR013785">
    <property type="entry name" value="Aldolase_TIM"/>
</dbReference>
<dbReference type="InterPro" id="IPR006638">
    <property type="entry name" value="Elp3/MiaA/NifB-like_rSAM"/>
</dbReference>
<dbReference type="InterPro" id="IPR031691">
    <property type="entry name" value="LIAS_N"/>
</dbReference>
<dbReference type="InterPro" id="IPR003698">
    <property type="entry name" value="Lipoyl_synth"/>
</dbReference>
<dbReference type="InterPro" id="IPR007197">
    <property type="entry name" value="rSAM"/>
</dbReference>
<dbReference type="NCBIfam" id="TIGR00510">
    <property type="entry name" value="lipA"/>
    <property type="match status" value="1"/>
</dbReference>
<dbReference type="NCBIfam" id="NF004019">
    <property type="entry name" value="PRK05481.1"/>
    <property type="match status" value="1"/>
</dbReference>
<dbReference type="NCBIfam" id="NF009544">
    <property type="entry name" value="PRK12928.1"/>
    <property type="match status" value="1"/>
</dbReference>
<dbReference type="PANTHER" id="PTHR10949">
    <property type="entry name" value="LIPOYL SYNTHASE"/>
    <property type="match status" value="1"/>
</dbReference>
<dbReference type="PANTHER" id="PTHR10949:SF0">
    <property type="entry name" value="LIPOYL SYNTHASE, MITOCHONDRIAL"/>
    <property type="match status" value="1"/>
</dbReference>
<dbReference type="Pfam" id="PF16881">
    <property type="entry name" value="LIAS_N"/>
    <property type="match status" value="1"/>
</dbReference>
<dbReference type="Pfam" id="PF04055">
    <property type="entry name" value="Radical_SAM"/>
    <property type="match status" value="1"/>
</dbReference>
<dbReference type="PIRSF" id="PIRSF005963">
    <property type="entry name" value="Lipoyl_synth"/>
    <property type="match status" value="1"/>
</dbReference>
<dbReference type="SFLD" id="SFLDF00271">
    <property type="entry name" value="lipoyl_synthase"/>
    <property type="match status" value="1"/>
</dbReference>
<dbReference type="SFLD" id="SFLDG01058">
    <property type="entry name" value="lipoyl_synthase_like"/>
    <property type="match status" value="1"/>
</dbReference>
<dbReference type="SMART" id="SM00729">
    <property type="entry name" value="Elp3"/>
    <property type="match status" value="1"/>
</dbReference>
<dbReference type="SUPFAM" id="SSF102114">
    <property type="entry name" value="Radical SAM enzymes"/>
    <property type="match status" value="1"/>
</dbReference>
<dbReference type="PROSITE" id="PS51918">
    <property type="entry name" value="RADICAL_SAM"/>
    <property type="match status" value="1"/>
</dbReference>
<gene>
    <name evidence="1" type="primary">lipA</name>
    <name type="ordered locus">BMA10229_A1375</name>
</gene>
<keyword id="KW-0004">4Fe-4S</keyword>
<keyword id="KW-0963">Cytoplasm</keyword>
<keyword id="KW-0408">Iron</keyword>
<keyword id="KW-0411">Iron-sulfur</keyword>
<keyword id="KW-0479">Metal-binding</keyword>
<keyword id="KW-0949">S-adenosyl-L-methionine</keyword>
<keyword id="KW-0808">Transferase</keyword>
<proteinExistence type="inferred from homology"/>
<name>LIPA_BURM9</name>
<comment type="function">
    <text evidence="1">Catalyzes the radical-mediated insertion of two sulfur atoms into the C-6 and C-8 positions of the octanoyl moiety bound to the lipoyl domains of lipoate-dependent enzymes, thereby converting the octanoylated domains into lipoylated derivatives.</text>
</comment>
<comment type="catalytic activity">
    <reaction evidence="1">
        <text>[[Fe-S] cluster scaffold protein carrying a second [4Fe-4S](2+) cluster] + N(6)-octanoyl-L-lysyl-[protein] + 2 oxidized [2Fe-2S]-[ferredoxin] + 2 S-adenosyl-L-methionine + 4 H(+) = [[Fe-S] cluster scaffold protein] + N(6)-[(R)-dihydrolipoyl]-L-lysyl-[protein] + 4 Fe(3+) + 2 hydrogen sulfide + 2 5'-deoxyadenosine + 2 L-methionine + 2 reduced [2Fe-2S]-[ferredoxin]</text>
        <dbReference type="Rhea" id="RHEA:16585"/>
        <dbReference type="Rhea" id="RHEA-COMP:9928"/>
        <dbReference type="Rhea" id="RHEA-COMP:10000"/>
        <dbReference type="Rhea" id="RHEA-COMP:10001"/>
        <dbReference type="Rhea" id="RHEA-COMP:10475"/>
        <dbReference type="Rhea" id="RHEA-COMP:14568"/>
        <dbReference type="Rhea" id="RHEA-COMP:14569"/>
        <dbReference type="ChEBI" id="CHEBI:15378"/>
        <dbReference type="ChEBI" id="CHEBI:17319"/>
        <dbReference type="ChEBI" id="CHEBI:29034"/>
        <dbReference type="ChEBI" id="CHEBI:29919"/>
        <dbReference type="ChEBI" id="CHEBI:33722"/>
        <dbReference type="ChEBI" id="CHEBI:33737"/>
        <dbReference type="ChEBI" id="CHEBI:33738"/>
        <dbReference type="ChEBI" id="CHEBI:57844"/>
        <dbReference type="ChEBI" id="CHEBI:59789"/>
        <dbReference type="ChEBI" id="CHEBI:78809"/>
        <dbReference type="ChEBI" id="CHEBI:83100"/>
        <dbReference type="EC" id="2.8.1.8"/>
    </reaction>
</comment>
<comment type="cofactor">
    <cofactor evidence="1">
        <name>[4Fe-4S] cluster</name>
        <dbReference type="ChEBI" id="CHEBI:49883"/>
    </cofactor>
    <text evidence="1">Binds 2 [4Fe-4S] clusters per subunit. One cluster is coordinated with 3 cysteines and an exchangeable S-adenosyl-L-methionine.</text>
</comment>
<comment type="pathway">
    <text evidence="1">Protein modification; protein lipoylation via endogenous pathway; protein N(6)-(lipoyl)lysine from octanoyl-[acyl-carrier-protein]: step 2/2.</text>
</comment>
<comment type="subcellular location">
    <subcellularLocation>
        <location evidence="1">Cytoplasm</location>
    </subcellularLocation>
</comment>
<comment type="similarity">
    <text evidence="1">Belongs to the radical SAM superfamily. Lipoyl synthase family.</text>
</comment>
<sequence length="329" mass="36459">MTDLTATPAPAEPAASAYDPTAKQKAQAKTARIPIKIVPIEKLKKPEWIRVKAATSSSRFNEIKTILREHNLHTVCEEASCPNIGECFGKGTATFMIMGDKCTRRCPFCDVGHGRPDPLDADEPKNLARTIAALKLKYVVITSVDRDDLRDGGAGHFVECIREVREQSPATRIEILTPDFRGRLDRALAILNAAPPDVMNHNLETVPRLYKEARPGSDYAHSLKLLKDFKALHPDVATKSGLMVGLGETTDEILQVMRDLRAHDVDMLTIGQYLQPSEHHLPVREYVHPDTFKMYEEEAYKMGFTHAAVGAMVRSSYHADLQAHGAGVV</sequence>